<accession>C6DG45</accession>
<proteinExistence type="inferred from homology"/>
<reference key="1">
    <citation type="submission" date="2009-07" db="EMBL/GenBank/DDBJ databases">
        <title>Complete sequence of Pectobacterium carotovorum subsp. carotovorum PC1.</title>
        <authorList>
            <consortium name="US DOE Joint Genome Institute"/>
            <person name="Lucas S."/>
            <person name="Copeland A."/>
            <person name="Lapidus A."/>
            <person name="Glavina del Rio T."/>
            <person name="Tice H."/>
            <person name="Bruce D."/>
            <person name="Goodwin L."/>
            <person name="Pitluck S."/>
            <person name="Munk A.C."/>
            <person name="Brettin T."/>
            <person name="Detter J.C."/>
            <person name="Han C."/>
            <person name="Tapia R."/>
            <person name="Larimer F."/>
            <person name="Land M."/>
            <person name="Hauser L."/>
            <person name="Kyrpides N."/>
            <person name="Mikhailova N."/>
            <person name="Balakrishnan V."/>
            <person name="Glasner J."/>
            <person name="Perna N.T."/>
        </authorList>
    </citation>
    <scope>NUCLEOTIDE SEQUENCE [LARGE SCALE GENOMIC DNA]</scope>
    <source>
        <strain>PC1</strain>
    </source>
</reference>
<name>NHAB_PECCP</name>
<gene>
    <name evidence="1" type="primary">nhaB</name>
    <name type="ordered locus">PC1_1947</name>
</gene>
<feature type="chain" id="PRO_1000215678" description="Na(+)/H(+) antiporter NhaB">
    <location>
        <begin position="1"/>
        <end position="526"/>
    </location>
</feature>
<feature type="transmembrane region" description="Helical" evidence="1">
    <location>
        <begin position="14"/>
        <end position="34"/>
    </location>
</feature>
<feature type="transmembrane region" description="Helical" evidence="1">
    <location>
        <begin position="63"/>
        <end position="83"/>
    </location>
</feature>
<feature type="transmembrane region" description="Helical" evidence="1">
    <location>
        <begin position="99"/>
        <end position="119"/>
    </location>
</feature>
<feature type="transmembrane region" description="Helical" evidence="1">
    <location>
        <begin position="122"/>
        <end position="142"/>
    </location>
</feature>
<feature type="transmembrane region" description="Helical" evidence="1">
    <location>
        <begin position="146"/>
        <end position="166"/>
    </location>
</feature>
<feature type="transmembrane region" description="Helical" evidence="1">
    <location>
        <begin position="206"/>
        <end position="226"/>
    </location>
</feature>
<feature type="transmembrane region" description="Helical" evidence="1">
    <location>
        <begin position="239"/>
        <end position="259"/>
    </location>
</feature>
<feature type="transmembrane region" description="Helical" evidence="1">
    <location>
        <begin position="307"/>
        <end position="327"/>
    </location>
</feature>
<feature type="transmembrane region" description="Helical" evidence="1">
    <location>
        <begin position="357"/>
        <end position="377"/>
    </location>
</feature>
<feature type="transmembrane region" description="Helical" evidence="1">
    <location>
        <begin position="451"/>
        <end position="471"/>
    </location>
</feature>
<feature type="transmembrane region" description="Helical" evidence="1">
    <location>
        <begin position="479"/>
        <end position="499"/>
    </location>
</feature>
<sequence>MTGMPLHRALLKNFLGYAPDWYKLTIFCFLLVNPLLFYFVSPFWAGWLLVVEFIFTLGMALKCYPLQPGGLLALQAMLIGMTSPQQVWHEVTGNIEVLMLLVFMVAGIYFMKQLLLFVFTKLLLRIHSKALLSLAFCGAAAFLSAFLDALTVIAVVISVAIGFYGIYHRFASQQGGNEADISDDSALSSEEHRHTLEQFRAFLRSLLMHAGVGTALGGVMTMVGEPQNLIIAKSAGWDFVSFFLHMSPVTVPVFICGILTCVLVERFKLFGYGVNLPDNVRRVLEDYDRDMTEKRTPQDKVRLLVQAVIGVWLIVALAFHLAEVGLIGLSVIIMATAFCGVTEEHAIGKAFQDAMPFTALLTVFFAIVAVIIDQQLFSPIIRYVLQSSESSQLTQFYLFNGLLSSISDNVFVGSVYINEARSAFENGHISLSQFELLAVAINTGTNLPSVATPNGQAAFLFLLTSSLAPLIRLSYGRMVIMALPYTIVMTLVGLLCVEFTLVPFTDFLMNNHWISLPNLTLSGSHS</sequence>
<evidence type="ECO:0000255" key="1">
    <source>
        <dbReference type="HAMAP-Rule" id="MF_01599"/>
    </source>
</evidence>
<protein>
    <recommendedName>
        <fullName evidence="1">Na(+)/H(+) antiporter NhaB</fullName>
    </recommendedName>
    <alternativeName>
        <fullName evidence="1">Sodium/proton antiporter NhaB</fullName>
    </alternativeName>
</protein>
<dbReference type="EMBL" id="CP001657">
    <property type="protein sequence ID" value="ACT12988.1"/>
    <property type="molecule type" value="Genomic_DNA"/>
</dbReference>
<dbReference type="RefSeq" id="WP_015840181.1">
    <property type="nucleotide sequence ID" value="NC_012917.1"/>
</dbReference>
<dbReference type="SMR" id="C6DG45"/>
<dbReference type="STRING" id="561230.PC1_1947"/>
<dbReference type="KEGG" id="pct:PC1_1947"/>
<dbReference type="eggNOG" id="COG3067">
    <property type="taxonomic scope" value="Bacteria"/>
</dbReference>
<dbReference type="HOGENOM" id="CLU_041110_0_0_6"/>
<dbReference type="OrthoDB" id="5288732at2"/>
<dbReference type="Proteomes" id="UP000002736">
    <property type="component" value="Chromosome"/>
</dbReference>
<dbReference type="GO" id="GO:0005886">
    <property type="term" value="C:plasma membrane"/>
    <property type="evidence" value="ECO:0007669"/>
    <property type="project" value="UniProtKB-SubCell"/>
</dbReference>
<dbReference type="GO" id="GO:0015385">
    <property type="term" value="F:sodium:proton antiporter activity"/>
    <property type="evidence" value="ECO:0007669"/>
    <property type="project" value="InterPro"/>
</dbReference>
<dbReference type="HAMAP" id="MF_01599">
    <property type="entry name" value="NhaB"/>
    <property type="match status" value="1"/>
</dbReference>
<dbReference type="InterPro" id="IPR004671">
    <property type="entry name" value="Na+/H+_antiporter_NhaB"/>
</dbReference>
<dbReference type="NCBIfam" id="TIGR00774">
    <property type="entry name" value="NhaB"/>
    <property type="match status" value="1"/>
</dbReference>
<dbReference type="NCBIfam" id="NF007093">
    <property type="entry name" value="PRK09547.1"/>
    <property type="match status" value="1"/>
</dbReference>
<dbReference type="PANTHER" id="PTHR43302:SF1">
    <property type="entry name" value="NA(+)_H(+) ANTIPORTER NHAB"/>
    <property type="match status" value="1"/>
</dbReference>
<dbReference type="PANTHER" id="PTHR43302">
    <property type="entry name" value="TRANSPORTER ARSB-RELATED"/>
    <property type="match status" value="1"/>
</dbReference>
<dbReference type="Pfam" id="PF06450">
    <property type="entry name" value="NhaB"/>
    <property type="match status" value="1"/>
</dbReference>
<organism>
    <name type="scientific">Pectobacterium carotovorum subsp. carotovorum (strain PC1)</name>
    <dbReference type="NCBI Taxonomy" id="561230"/>
    <lineage>
        <taxon>Bacteria</taxon>
        <taxon>Pseudomonadati</taxon>
        <taxon>Pseudomonadota</taxon>
        <taxon>Gammaproteobacteria</taxon>
        <taxon>Enterobacterales</taxon>
        <taxon>Pectobacteriaceae</taxon>
        <taxon>Pectobacterium</taxon>
    </lineage>
</organism>
<comment type="function">
    <text evidence="1">Na(+)/H(+) antiporter that extrudes sodium in exchange for external protons.</text>
</comment>
<comment type="catalytic activity">
    <reaction evidence="1">
        <text>2 Na(+)(in) + 3 H(+)(out) = 2 Na(+)(out) + 3 H(+)(in)</text>
        <dbReference type="Rhea" id="RHEA:29247"/>
        <dbReference type="ChEBI" id="CHEBI:15378"/>
        <dbReference type="ChEBI" id="CHEBI:29101"/>
    </reaction>
    <physiologicalReaction direction="left-to-right" evidence="1">
        <dbReference type="Rhea" id="RHEA:29248"/>
    </physiologicalReaction>
</comment>
<comment type="subcellular location">
    <subcellularLocation>
        <location evidence="1">Cell inner membrane</location>
        <topology evidence="1">Multi-pass membrane protein</topology>
    </subcellularLocation>
</comment>
<comment type="similarity">
    <text evidence="1">Belongs to the NhaB Na(+)/H(+) (TC 2.A.34) antiporter family.</text>
</comment>
<keyword id="KW-0050">Antiport</keyword>
<keyword id="KW-0997">Cell inner membrane</keyword>
<keyword id="KW-1003">Cell membrane</keyword>
<keyword id="KW-0406">Ion transport</keyword>
<keyword id="KW-0472">Membrane</keyword>
<keyword id="KW-0915">Sodium</keyword>
<keyword id="KW-0739">Sodium transport</keyword>
<keyword id="KW-0812">Transmembrane</keyword>
<keyword id="KW-1133">Transmembrane helix</keyword>
<keyword id="KW-0813">Transport</keyword>